<accession>A9IQI8</accession>
<organism>
    <name type="scientific">Bartonella tribocorum (strain CIP 105476 / IBS 506)</name>
    <dbReference type="NCBI Taxonomy" id="382640"/>
    <lineage>
        <taxon>Bacteria</taxon>
        <taxon>Pseudomonadati</taxon>
        <taxon>Pseudomonadota</taxon>
        <taxon>Alphaproteobacteria</taxon>
        <taxon>Hyphomicrobiales</taxon>
        <taxon>Bartonellaceae</taxon>
        <taxon>Bartonella</taxon>
    </lineage>
</organism>
<feature type="chain" id="PRO_0000368347" description="ATP synthase subunit b 2">
    <location>
        <begin position="1"/>
        <end position="164"/>
    </location>
</feature>
<feature type="transmembrane region" description="Helical" evidence="1">
    <location>
        <begin position="4"/>
        <end position="24"/>
    </location>
</feature>
<reference key="1">
    <citation type="journal article" date="2007" name="Nat. Genet.">
        <title>Genomic analysis of Bartonella identifies type IV secretion systems as host adaptability factors.</title>
        <authorList>
            <person name="Saenz H.L."/>
            <person name="Engel P."/>
            <person name="Stoeckli M.C."/>
            <person name="Lanz C."/>
            <person name="Raddatz G."/>
            <person name="Vayssier-Taussat M."/>
            <person name="Birtles R."/>
            <person name="Schuster S.C."/>
            <person name="Dehio C."/>
        </authorList>
    </citation>
    <scope>NUCLEOTIDE SEQUENCE [LARGE SCALE GENOMIC DNA]</scope>
    <source>
        <strain>CIP 105476 / IBS 506</strain>
    </source>
</reference>
<keyword id="KW-0066">ATP synthesis</keyword>
<keyword id="KW-0997">Cell inner membrane</keyword>
<keyword id="KW-1003">Cell membrane</keyword>
<keyword id="KW-0138">CF(0)</keyword>
<keyword id="KW-0375">Hydrogen ion transport</keyword>
<keyword id="KW-0406">Ion transport</keyword>
<keyword id="KW-0472">Membrane</keyword>
<keyword id="KW-0812">Transmembrane</keyword>
<keyword id="KW-1133">Transmembrane helix</keyword>
<keyword id="KW-0813">Transport</keyword>
<name>ATPF2_BART1</name>
<proteinExistence type="inferred from homology"/>
<protein>
    <recommendedName>
        <fullName evidence="1">ATP synthase subunit b 2</fullName>
    </recommendedName>
    <alternativeName>
        <fullName evidence="1">ATP synthase F(0) sector subunit b 2</fullName>
    </alternativeName>
    <alternativeName>
        <fullName evidence="1">ATPase subunit I 2</fullName>
    </alternativeName>
    <alternativeName>
        <fullName evidence="1">F-type ATPase subunit b 2</fullName>
        <shortName evidence="1">F-ATPase subunit b 2</shortName>
    </alternativeName>
</protein>
<comment type="function">
    <text evidence="1">F(1)F(0) ATP synthase produces ATP from ADP in the presence of a proton or sodium gradient. F-type ATPases consist of two structural domains, F(1) containing the extramembraneous catalytic core and F(0) containing the membrane proton channel, linked together by a central stalk and a peripheral stalk. During catalysis, ATP synthesis in the catalytic domain of F(1) is coupled via a rotary mechanism of the central stalk subunits to proton translocation.</text>
</comment>
<comment type="function">
    <text evidence="1">Component of the F(0) channel, it forms part of the peripheral stalk, linking F(1) to F(0).</text>
</comment>
<comment type="subunit">
    <text evidence="1">F-type ATPases have 2 components, F(1) - the catalytic core - and F(0) - the membrane proton channel. F(1) has five subunits: alpha(3), beta(3), gamma(1), delta(1), epsilon(1). F(0) has three main subunits: a(1), b(2) and c(10-14). The alpha and beta chains form an alternating ring which encloses part of the gamma chain. F(1) is attached to F(0) by a central stalk formed by the gamma and epsilon chains, while a peripheral stalk is formed by the delta and b chains.</text>
</comment>
<comment type="subcellular location">
    <subcellularLocation>
        <location evidence="1">Cell inner membrane</location>
        <topology evidence="1">Single-pass membrane protein</topology>
    </subcellularLocation>
</comment>
<comment type="similarity">
    <text evidence="1">Belongs to the ATPase B chain family.</text>
</comment>
<evidence type="ECO:0000255" key="1">
    <source>
        <dbReference type="HAMAP-Rule" id="MF_01398"/>
    </source>
</evidence>
<sequence length="164" mass="18566">MSDTFWAFVGLVLFLALLVYFQIPQKIIHHLDARAKRIKDELDEALRLREEAQEILAEYQRKHAEAEKDAQEIIAAAKHEVESVIAEARTKAEEYVKNRNKLAEQKIAQAEADAIRMVSSSAIDLAISTARVLIAKELDSNRADELVKEALSKESLSKMKTHLN</sequence>
<gene>
    <name evidence="1" type="primary">atpF2</name>
    <name type="ordered locus">BT_0625</name>
</gene>
<dbReference type="EMBL" id="AM260525">
    <property type="protein sequence ID" value="CAK01063.1"/>
    <property type="molecule type" value="Genomic_DNA"/>
</dbReference>
<dbReference type="RefSeq" id="WP_012231169.1">
    <property type="nucleotide sequence ID" value="NC_010161.1"/>
</dbReference>
<dbReference type="SMR" id="A9IQI8"/>
<dbReference type="KEGG" id="btr:BT_0625"/>
<dbReference type="eggNOG" id="COG0711">
    <property type="taxonomic scope" value="Bacteria"/>
</dbReference>
<dbReference type="HOGENOM" id="CLU_079215_6_1_5"/>
<dbReference type="Proteomes" id="UP000001592">
    <property type="component" value="Chromosome"/>
</dbReference>
<dbReference type="GO" id="GO:0005886">
    <property type="term" value="C:plasma membrane"/>
    <property type="evidence" value="ECO:0007669"/>
    <property type="project" value="UniProtKB-SubCell"/>
</dbReference>
<dbReference type="GO" id="GO:0045259">
    <property type="term" value="C:proton-transporting ATP synthase complex"/>
    <property type="evidence" value="ECO:0007669"/>
    <property type="project" value="UniProtKB-KW"/>
</dbReference>
<dbReference type="GO" id="GO:0046933">
    <property type="term" value="F:proton-transporting ATP synthase activity, rotational mechanism"/>
    <property type="evidence" value="ECO:0007669"/>
    <property type="project" value="UniProtKB-UniRule"/>
</dbReference>
<dbReference type="GO" id="GO:0046961">
    <property type="term" value="F:proton-transporting ATPase activity, rotational mechanism"/>
    <property type="evidence" value="ECO:0007669"/>
    <property type="project" value="TreeGrafter"/>
</dbReference>
<dbReference type="CDD" id="cd06503">
    <property type="entry name" value="ATP-synt_Fo_b"/>
    <property type="match status" value="1"/>
</dbReference>
<dbReference type="HAMAP" id="MF_01398">
    <property type="entry name" value="ATP_synth_b_bprime"/>
    <property type="match status" value="1"/>
</dbReference>
<dbReference type="InterPro" id="IPR002146">
    <property type="entry name" value="ATP_synth_b/b'su_bac/chlpt"/>
</dbReference>
<dbReference type="InterPro" id="IPR050059">
    <property type="entry name" value="ATP_synthase_B_chain"/>
</dbReference>
<dbReference type="NCBIfam" id="NF006611">
    <property type="entry name" value="PRK09173.1"/>
    <property type="match status" value="1"/>
</dbReference>
<dbReference type="PANTHER" id="PTHR33445:SF1">
    <property type="entry name" value="ATP SYNTHASE SUBUNIT B"/>
    <property type="match status" value="1"/>
</dbReference>
<dbReference type="PANTHER" id="PTHR33445">
    <property type="entry name" value="ATP SYNTHASE SUBUNIT B', CHLOROPLASTIC"/>
    <property type="match status" value="1"/>
</dbReference>
<dbReference type="Pfam" id="PF00430">
    <property type="entry name" value="ATP-synt_B"/>
    <property type="match status" value="1"/>
</dbReference>